<feature type="chain" id="PRO_0000166897" description="Malate synthase G">
    <location>
        <begin position="1"/>
        <end position="723"/>
    </location>
</feature>
<feature type="active site" description="Proton acceptor" evidence="1">
    <location>
        <position position="338"/>
    </location>
</feature>
<feature type="active site" description="Proton donor" evidence="1">
    <location>
        <position position="629"/>
    </location>
</feature>
<feature type="binding site" evidence="1">
    <location>
        <position position="116"/>
    </location>
    <ligand>
        <name>acetyl-CoA</name>
        <dbReference type="ChEBI" id="CHEBI:57288"/>
    </ligand>
</feature>
<feature type="binding site" evidence="1">
    <location>
        <begin position="123"/>
        <end position="124"/>
    </location>
    <ligand>
        <name>acetyl-CoA</name>
        <dbReference type="ChEBI" id="CHEBI:57288"/>
    </ligand>
</feature>
<feature type="binding site" evidence="1">
    <location>
        <position position="274"/>
    </location>
    <ligand>
        <name>acetyl-CoA</name>
        <dbReference type="ChEBI" id="CHEBI:57288"/>
    </ligand>
</feature>
<feature type="binding site" evidence="1">
    <location>
        <position position="311"/>
    </location>
    <ligand>
        <name>acetyl-CoA</name>
        <dbReference type="ChEBI" id="CHEBI:57288"/>
    </ligand>
</feature>
<feature type="binding site" evidence="1">
    <location>
        <position position="338"/>
    </location>
    <ligand>
        <name>glyoxylate</name>
        <dbReference type="ChEBI" id="CHEBI:36655"/>
    </ligand>
</feature>
<feature type="binding site" evidence="1">
    <location>
        <position position="430"/>
    </location>
    <ligand>
        <name>glyoxylate</name>
        <dbReference type="ChEBI" id="CHEBI:36655"/>
    </ligand>
</feature>
<feature type="binding site" evidence="1">
    <location>
        <position position="430"/>
    </location>
    <ligand>
        <name>Mg(2+)</name>
        <dbReference type="ChEBI" id="CHEBI:18420"/>
    </ligand>
</feature>
<feature type="binding site" evidence="1">
    <location>
        <begin position="455"/>
        <end position="458"/>
    </location>
    <ligand>
        <name>glyoxylate</name>
        <dbReference type="ChEBI" id="CHEBI:36655"/>
    </ligand>
</feature>
<feature type="binding site" evidence="1">
    <location>
        <position position="458"/>
    </location>
    <ligand>
        <name>Mg(2+)</name>
        <dbReference type="ChEBI" id="CHEBI:18420"/>
    </ligand>
</feature>
<feature type="binding site" evidence="1">
    <location>
        <position position="539"/>
    </location>
    <ligand>
        <name>acetyl-CoA</name>
        <dbReference type="ChEBI" id="CHEBI:57288"/>
    </ligand>
</feature>
<feature type="modified residue" description="Cysteine sulfenic acid (-SOH)" evidence="1">
    <location>
        <position position="615"/>
    </location>
</feature>
<name>MASZ_RHILV</name>
<keyword id="KW-0963">Cytoplasm</keyword>
<keyword id="KW-0329">Glyoxylate bypass</keyword>
<keyword id="KW-0460">Magnesium</keyword>
<keyword id="KW-0479">Metal-binding</keyword>
<keyword id="KW-0558">Oxidation</keyword>
<keyword id="KW-0808">Transferase</keyword>
<keyword id="KW-0816">Tricarboxylic acid cycle</keyword>
<sequence>MSRVDKNGLAIETVLHDFLVEEVLPGLAVDADKFFADFSAIVHDLAPKNCALLAKRDELQVKIDDWYRRHGAPADMDEYQSFLREIGYLLPEGSDFQVSTQNVDPEIASIAGPQLVVPVMNARYALNAANARWGSLYDALYGTDAIPESDGAEKGKSYNPKRGEKVIAWVRDFLDTSAPLQDCRWKDVGSFAVKDGALVVRSIDGEQAMLTDGKHFAGYRGDAAAPTHILLKNNGIHIEIVIDAATTIGKADSAHISDVWLESAITTIMDCEDSIAAVDAEDKVVVYRNWLGLMKGDLQEEVAKGGTSFIRTLNPDLQYAGPDGAAFEVHRRSLMLVRNVGHLMTNPAILDRDGNEVPEGIMDAAITGLIALYDIGPSGRRKNSRTGSMYVVKPKMHGPEEVAFAVEIFSRVEDALGLPRNTIKMGIMDEERRTTVNLKECIRAARERVVFINTGFLDRTGDEIHTSMEAGPMIRKGDMRQAAWISAYENWNVDIGLECGLAGHAQIGKGMWAMPDLMAAMLEQKIAHPKAGANTAWVPSPTAATLHATHYHRVNVARVQQGLKDRARAKLSDILSVPVAVRPNWTPEEIQRELDNNAQGILGYVVRWVDQGVGCSKVPDINNVGLMEDRATLRISAQHMANWLHHKVVTEAQIIETMRRMAAVVDRQNASDPAYRPMAGNFDDSIAFQAALDLVLKGREQPNGYTEPVLHRRRLELKAKQAA</sequence>
<reference key="1">
    <citation type="submission" date="2001-10" db="EMBL/GenBank/DDBJ databases">
        <title>Malate synthase gene from Rhizobium leguminosarum.</title>
        <authorList>
            <person name="Garcia de los Santos A."/>
            <person name="Hynes M.F."/>
        </authorList>
    </citation>
    <scope>NUCLEOTIDE SEQUENCE [GENOMIC DNA]</scope>
    <source>
        <strain>VF39</strain>
    </source>
</reference>
<accession>Q937W7</accession>
<protein>
    <recommendedName>
        <fullName evidence="1">Malate synthase G</fullName>
        <ecNumber evidence="1">2.3.3.9</ecNumber>
    </recommendedName>
</protein>
<dbReference type="EC" id="2.3.3.9" evidence="1"/>
<dbReference type="EMBL" id="AY059637">
    <property type="protein sequence ID" value="AAL17965.1"/>
    <property type="molecule type" value="Genomic_DNA"/>
</dbReference>
<dbReference type="SMR" id="Q937W7"/>
<dbReference type="UniPathway" id="UPA00703">
    <property type="reaction ID" value="UER00720"/>
</dbReference>
<dbReference type="GO" id="GO:0005829">
    <property type="term" value="C:cytosol"/>
    <property type="evidence" value="ECO:0007669"/>
    <property type="project" value="TreeGrafter"/>
</dbReference>
<dbReference type="GO" id="GO:0000287">
    <property type="term" value="F:magnesium ion binding"/>
    <property type="evidence" value="ECO:0007669"/>
    <property type="project" value="TreeGrafter"/>
</dbReference>
<dbReference type="GO" id="GO:0004474">
    <property type="term" value="F:malate synthase activity"/>
    <property type="evidence" value="ECO:0007669"/>
    <property type="project" value="UniProtKB-UniRule"/>
</dbReference>
<dbReference type="GO" id="GO:0009436">
    <property type="term" value="P:glyoxylate catabolic process"/>
    <property type="evidence" value="ECO:0007669"/>
    <property type="project" value="TreeGrafter"/>
</dbReference>
<dbReference type="GO" id="GO:0006097">
    <property type="term" value="P:glyoxylate cycle"/>
    <property type="evidence" value="ECO:0007669"/>
    <property type="project" value="UniProtKB-UniRule"/>
</dbReference>
<dbReference type="GO" id="GO:0006099">
    <property type="term" value="P:tricarboxylic acid cycle"/>
    <property type="evidence" value="ECO:0007669"/>
    <property type="project" value="UniProtKB-KW"/>
</dbReference>
<dbReference type="CDD" id="cd00728">
    <property type="entry name" value="malate_synt_G"/>
    <property type="match status" value="1"/>
</dbReference>
<dbReference type="FunFam" id="3.20.20.360:FF:000002">
    <property type="entry name" value="Malate synthase G"/>
    <property type="match status" value="1"/>
</dbReference>
<dbReference type="Gene3D" id="3.20.20.360">
    <property type="entry name" value="Malate synthase, domain 3"/>
    <property type="match status" value="2"/>
</dbReference>
<dbReference type="Gene3D" id="1.20.1220.12">
    <property type="entry name" value="Malate synthase, domain III"/>
    <property type="match status" value="1"/>
</dbReference>
<dbReference type="HAMAP" id="MF_00641">
    <property type="entry name" value="Malate_synth_G"/>
    <property type="match status" value="1"/>
</dbReference>
<dbReference type="InterPro" id="IPR044856">
    <property type="entry name" value="Malate_synth_C_sf"/>
</dbReference>
<dbReference type="InterPro" id="IPR011076">
    <property type="entry name" value="Malate_synth_sf"/>
</dbReference>
<dbReference type="InterPro" id="IPR001465">
    <property type="entry name" value="Malate_synthase_TIM"/>
</dbReference>
<dbReference type="InterPro" id="IPR006253">
    <property type="entry name" value="Malate_synthG"/>
</dbReference>
<dbReference type="InterPro" id="IPR048355">
    <property type="entry name" value="MS_C"/>
</dbReference>
<dbReference type="InterPro" id="IPR048356">
    <property type="entry name" value="MS_N"/>
</dbReference>
<dbReference type="InterPro" id="IPR046363">
    <property type="entry name" value="MS_N_TIM-barrel_dom"/>
</dbReference>
<dbReference type="InterPro" id="IPR048357">
    <property type="entry name" value="MSG_insertion"/>
</dbReference>
<dbReference type="NCBIfam" id="TIGR01345">
    <property type="entry name" value="malate_syn_G"/>
    <property type="match status" value="1"/>
</dbReference>
<dbReference type="NCBIfam" id="NF002825">
    <property type="entry name" value="PRK02999.1"/>
    <property type="match status" value="1"/>
</dbReference>
<dbReference type="PANTHER" id="PTHR42739">
    <property type="entry name" value="MALATE SYNTHASE G"/>
    <property type="match status" value="1"/>
</dbReference>
<dbReference type="PANTHER" id="PTHR42739:SF1">
    <property type="entry name" value="MALATE SYNTHASE G"/>
    <property type="match status" value="1"/>
</dbReference>
<dbReference type="Pfam" id="PF20659">
    <property type="entry name" value="MS_C"/>
    <property type="match status" value="1"/>
</dbReference>
<dbReference type="Pfam" id="PF20656">
    <property type="entry name" value="MS_N"/>
    <property type="match status" value="1"/>
</dbReference>
<dbReference type="Pfam" id="PF01274">
    <property type="entry name" value="MS_TIM-barrel"/>
    <property type="match status" value="1"/>
</dbReference>
<dbReference type="Pfam" id="PF20658">
    <property type="entry name" value="MSG_insertion"/>
    <property type="match status" value="1"/>
</dbReference>
<dbReference type="SUPFAM" id="SSF51645">
    <property type="entry name" value="Malate synthase G"/>
    <property type="match status" value="1"/>
</dbReference>
<evidence type="ECO:0000255" key="1">
    <source>
        <dbReference type="HAMAP-Rule" id="MF_00641"/>
    </source>
</evidence>
<proteinExistence type="inferred from homology"/>
<organism>
    <name type="scientific">Rhizobium leguminosarum bv. viciae</name>
    <dbReference type="NCBI Taxonomy" id="387"/>
    <lineage>
        <taxon>Bacteria</taxon>
        <taxon>Pseudomonadati</taxon>
        <taxon>Pseudomonadota</taxon>
        <taxon>Alphaproteobacteria</taxon>
        <taxon>Hyphomicrobiales</taxon>
        <taxon>Rhizobiaceae</taxon>
        <taxon>Rhizobium/Agrobacterium group</taxon>
        <taxon>Rhizobium</taxon>
    </lineage>
</organism>
<gene>
    <name evidence="1" type="primary">glcB</name>
    <name type="synonym">masG</name>
</gene>
<comment type="function">
    <text evidence="1">Involved in the glycolate utilization. Catalyzes the condensation and subsequent hydrolysis of acetyl-coenzyme A (acetyl-CoA) and glyoxylate to form malate and CoA.</text>
</comment>
<comment type="catalytic activity">
    <reaction evidence="1">
        <text>glyoxylate + acetyl-CoA + H2O = (S)-malate + CoA + H(+)</text>
        <dbReference type="Rhea" id="RHEA:18181"/>
        <dbReference type="ChEBI" id="CHEBI:15377"/>
        <dbReference type="ChEBI" id="CHEBI:15378"/>
        <dbReference type="ChEBI" id="CHEBI:15589"/>
        <dbReference type="ChEBI" id="CHEBI:36655"/>
        <dbReference type="ChEBI" id="CHEBI:57287"/>
        <dbReference type="ChEBI" id="CHEBI:57288"/>
        <dbReference type="EC" id="2.3.3.9"/>
    </reaction>
</comment>
<comment type="cofactor">
    <cofactor evidence="1">
        <name>Mg(2+)</name>
        <dbReference type="ChEBI" id="CHEBI:18420"/>
    </cofactor>
</comment>
<comment type="pathway">
    <text evidence="1">Carbohydrate metabolism; glyoxylate cycle; (S)-malate from isocitrate: step 2/2.</text>
</comment>
<comment type="subunit">
    <text evidence="1">Monomer.</text>
</comment>
<comment type="subcellular location">
    <subcellularLocation>
        <location evidence="1">Cytoplasm</location>
    </subcellularLocation>
</comment>
<comment type="similarity">
    <text evidence="1">Belongs to the malate synthase family. GlcB subfamily.</text>
</comment>